<accession>Q4UY33</accession>
<organism>
    <name type="scientific">Xanthomonas campestris pv. campestris (strain 8004)</name>
    <dbReference type="NCBI Taxonomy" id="314565"/>
    <lineage>
        <taxon>Bacteria</taxon>
        <taxon>Pseudomonadati</taxon>
        <taxon>Pseudomonadota</taxon>
        <taxon>Gammaproteobacteria</taxon>
        <taxon>Lysobacterales</taxon>
        <taxon>Lysobacteraceae</taxon>
        <taxon>Xanthomonas</taxon>
    </lineage>
</organism>
<protein>
    <recommendedName>
        <fullName evidence="1">Xaa-Pro dipeptidase</fullName>
        <shortName evidence="1">X-Pro dipeptidase</shortName>
        <ecNumber evidence="1">3.4.13.9</ecNumber>
    </recommendedName>
    <alternativeName>
        <fullName evidence="1">Imidodipeptidase</fullName>
    </alternativeName>
    <alternativeName>
        <fullName evidence="1">Proline dipeptidase</fullName>
        <shortName evidence="1">Prolidase</shortName>
    </alternativeName>
</protein>
<dbReference type="EC" id="3.4.13.9" evidence="1"/>
<dbReference type="EMBL" id="CP000050">
    <property type="protein sequence ID" value="AAY48040.1"/>
    <property type="molecule type" value="Genomic_DNA"/>
</dbReference>
<dbReference type="RefSeq" id="WP_011038359.1">
    <property type="nucleotide sequence ID" value="NZ_CP155948.1"/>
</dbReference>
<dbReference type="SMR" id="Q4UY33"/>
<dbReference type="MEROPS" id="M24.003"/>
<dbReference type="KEGG" id="xcb:XC_0966"/>
<dbReference type="HOGENOM" id="CLU_050675_0_0_6"/>
<dbReference type="Proteomes" id="UP000000420">
    <property type="component" value="Chromosome"/>
</dbReference>
<dbReference type="GO" id="GO:0005829">
    <property type="term" value="C:cytosol"/>
    <property type="evidence" value="ECO:0007669"/>
    <property type="project" value="TreeGrafter"/>
</dbReference>
<dbReference type="GO" id="GO:0004177">
    <property type="term" value="F:aminopeptidase activity"/>
    <property type="evidence" value="ECO:0007669"/>
    <property type="project" value="TreeGrafter"/>
</dbReference>
<dbReference type="GO" id="GO:0046872">
    <property type="term" value="F:metal ion binding"/>
    <property type="evidence" value="ECO:0007669"/>
    <property type="project" value="UniProtKB-KW"/>
</dbReference>
<dbReference type="GO" id="GO:0008235">
    <property type="term" value="F:metalloexopeptidase activity"/>
    <property type="evidence" value="ECO:0007669"/>
    <property type="project" value="UniProtKB-UniRule"/>
</dbReference>
<dbReference type="GO" id="GO:0016795">
    <property type="term" value="F:phosphoric triester hydrolase activity"/>
    <property type="evidence" value="ECO:0007669"/>
    <property type="project" value="InterPro"/>
</dbReference>
<dbReference type="GO" id="GO:0102009">
    <property type="term" value="F:proline dipeptidase activity"/>
    <property type="evidence" value="ECO:0007669"/>
    <property type="project" value="UniProtKB-EC"/>
</dbReference>
<dbReference type="GO" id="GO:0006508">
    <property type="term" value="P:proteolysis"/>
    <property type="evidence" value="ECO:0007669"/>
    <property type="project" value="UniProtKB-KW"/>
</dbReference>
<dbReference type="CDD" id="cd01087">
    <property type="entry name" value="Prolidase"/>
    <property type="match status" value="1"/>
</dbReference>
<dbReference type="Gene3D" id="3.90.230.10">
    <property type="entry name" value="Creatinase/methionine aminopeptidase superfamily"/>
    <property type="match status" value="1"/>
</dbReference>
<dbReference type="Gene3D" id="3.40.350.10">
    <property type="entry name" value="Creatinase/prolidase N-terminal domain"/>
    <property type="match status" value="1"/>
</dbReference>
<dbReference type="HAMAP" id="MF_01279">
    <property type="entry name" value="X_Pro_dipeptid"/>
    <property type="match status" value="1"/>
</dbReference>
<dbReference type="InterPro" id="IPR029149">
    <property type="entry name" value="Creatin/AminoP/Spt16_N"/>
</dbReference>
<dbReference type="InterPro" id="IPR036005">
    <property type="entry name" value="Creatinase/aminopeptidase-like"/>
</dbReference>
<dbReference type="InterPro" id="IPR048819">
    <property type="entry name" value="PepQ_N"/>
</dbReference>
<dbReference type="InterPro" id="IPR000994">
    <property type="entry name" value="Pept_M24"/>
</dbReference>
<dbReference type="InterPro" id="IPR001131">
    <property type="entry name" value="Peptidase_M24B_aminopep-P_CS"/>
</dbReference>
<dbReference type="InterPro" id="IPR052433">
    <property type="entry name" value="X-Pro_dipept-like"/>
</dbReference>
<dbReference type="InterPro" id="IPR022846">
    <property type="entry name" value="X_Pro_dipept"/>
</dbReference>
<dbReference type="NCBIfam" id="NF010133">
    <property type="entry name" value="PRK13607.1"/>
    <property type="match status" value="1"/>
</dbReference>
<dbReference type="PANTHER" id="PTHR43226">
    <property type="entry name" value="XAA-PRO AMINOPEPTIDASE 3"/>
    <property type="match status" value="1"/>
</dbReference>
<dbReference type="PANTHER" id="PTHR43226:SF8">
    <property type="entry name" value="XAA-PRO DIPEPTIDASE"/>
    <property type="match status" value="1"/>
</dbReference>
<dbReference type="Pfam" id="PF21216">
    <property type="entry name" value="PepQ_N"/>
    <property type="match status" value="1"/>
</dbReference>
<dbReference type="Pfam" id="PF00557">
    <property type="entry name" value="Peptidase_M24"/>
    <property type="match status" value="1"/>
</dbReference>
<dbReference type="SUPFAM" id="SSF55920">
    <property type="entry name" value="Creatinase/aminopeptidase"/>
    <property type="match status" value="1"/>
</dbReference>
<dbReference type="PROSITE" id="PS00491">
    <property type="entry name" value="PROLINE_PEPTIDASE"/>
    <property type="match status" value="1"/>
</dbReference>
<gene>
    <name evidence="1" type="primary">pepQ</name>
    <name type="ordered locus">XC_0966</name>
</gene>
<keyword id="KW-0224">Dipeptidase</keyword>
<keyword id="KW-0378">Hydrolase</keyword>
<keyword id="KW-0464">Manganese</keyword>
<keyword id="KW-0479">Metal-binding</keyword>
<keyword id="KW-0482">Metalloprotease</keyword>
<keyword id="KW-0645">Protease</keyword>
<comment type="function">
    <text evidence="1">Splits dipeptides with a prolyl residue in the C-terminal position.</text>
</comment>
<comment type="catalytic activity">
    <reaction evidence="1">
        <text>Xaa-L-Pro dipeptide + H2O = an L-alpha-amino acid + L-proline</text>
        <dbReference type="Rhea" id="RHEA:76407"/>
        <dbReference type="ChEBI" id="CHEBI:15377"/>
        <dbReference type="ChEBI" id="CHEBI:59869"/>
        <dbReference type="ChEBI" id="CHEBI:60039"/>
        <dbReference type="ChEBI" id="CHEBI:195196"/>
        <dbReference type="EC" id="3.4.13.9"/>
    </reaction>
</comment>
<comment type="cofactor">
    <cofactor evidence="1">
        <name>Mn(2+)</name>
        <dbReference type="ChEBI" id="CHEBI:29035"/>
    </cofactor>
    <text evidence="1">Binds 2 manganese ions per subunit.</text>
</comment>
<comment type="similarity">
    <text evidence="1">Belongs to the peptidase M24B family. Bacterial-type prolidase subfamily.</text>
</comment>
<proteinExistence type="inferred from homology"/>
<name>PEPQ_XANC8</name>
<sequence length="441" mass="48251">MTQPSLSVLYSDHLRTLTARADQALQRGGFDHLVIPSGTTHYQLFDDRDYPFAVNPQFKAWVPLTRMPHSWLVYTPGKRPTVIFYQPFDYWHVVPDAPSGWWVEHCDIHIIRTPEAALPLLPARTERCAILGEAASALGACVPNNPAAVLDFLDYQRAFKTPYELAVMRLAQQLAVRGHRAAEAAFRAGQSEFGIHMAYCSAVGQDANELPYGNIIALNEHGAVLHYTELGRQAPQPLRSFLIDAGASAHGYASDITRTYAADAGSEFQALIDAVDAAQLRMGNAVRAGMDYKQLHVDAHLSLMGILHDFGIITVSPEAALATGVSAAFFPHGLGHLIGLQVHDVAGFAASDRGGRIERPDGHPYLRLTRVLEPGMVVTIEPGVYFIDMLLDEVKKNGHAASVNWDRVAQFAPYGGIRIEDEVVCTDGDPENLTRPVFAAP</sequence>
<evidence type="ECO:0000255" key="1">
    <source>
        <dbReference type="HAMAP-Rule" id="MF_01279"/>
    </source>
</evidence>
<reference key="1">
    <citation type="journal article" date="2005" name="Genome Res.">
        <title>Comparative and functional genomic analyses of the pathogenicity of phytopathogen Xanthomonas campestris pv. campestris.</title>
        <authorList>
            <person name="Qian W."/>
            <person name="Jia Y."/>
            <person name="Ren S.-X."/>
            <person name="He Y.-Q."/>
            <person name="Feng J.-X."/>
            <person name="Lu L.-F."/>
            <person name="Sun Q."/>
            <person name="Ying G."/>
            <person name="Tang D.-J."/>
            <person name="Tang H."/>
            <person name="Wu W."/>
            <person name="Hao P."/>
            <person name="Wang L."/>
            <person name="Jiang B.-L."/>
            <person name="Zeng S."/>
            <person name="Gu W.-Y."/>
            <person name="Lu G."/>
            <person name="Rong L."/>
            <person name="Tian Y."/>
            <person name="Yao Z."/>
            <person name="Fu G."/>
            <person name="Chen B."/>
            <person name="Fang R."/>
            <person name="Qiang B."/>
            <person name="Chen Z."/>
            <person name="Zhao G.-P."/>
            <person name="Tang J.-L."/>
            <person name="He C."/>
        </authorList>
    </citation>
    <scope>NUCLEOTIDE SEQUENCE [LARGE SCALE GENOMIC DNA]</scope>
    <source>
        <strain>8004</strain>
    </source>
</reference>
<feature type="chain" id="PRO_0000303874" description="Xaa-Pro dipeptidase">
    <location>
        <begin position="1"/>
        <end position="441"/>
    </location>
</feature>
<feature type="binding site" evidence="1">
    <location>
        <position position="244"/>
    </location>
    <ligand>
        <name>Mn(2+)</name>
        <dbReference type="ChEBI" id="CHEBI:29035"/>
        <label>2</label>
    </ligand>
</feature>
<feature type="binding site" evidence="1">
    <location>
        <position position="255"/>
    </location>
    <ligand>
        <name>Mn(2+)</name>
        <dbReference type="ChEBI" id="CHEBI:29035"/>
        <label>1</label>
    </ligand>
</feature>
<feature type="binding site" evidence="1">
    <location>
        <position position="255"/>
    </location>
    <ligand>
        <name>Mn(2+)</name>
        <dbReference type="ChEBI" id="CHEBI:29035"/>
        <label>2</label>
    </ligand>
</feature>
<feature type="binding site" evidence="1">
    <location>
        <position position="336"/>
    </location>
    <ligand>
        <name>Mn(2+)</name>
        <dbReference type="ChEBI" id="CHEBI:29035"/>
        <label>1</label>
    </ligand>
</feature>
<feature type="binding site" evidence="1">
    <location>
        <position position="381"/>
    </location>
    <ligand>
        <name>Mn(2+)</name>
        <dbReference type="ChEBI" id="CHEBI:29035"/>
        <label>1</label>
    </ligand>
</feature>
<feature type="binding site" evidence="1">
    <location>
        <position position="420"/>
    </location>
    <ligand>
        <name>Mn(2+)</name>
        <dbReference type="ChEBI" id="CHEBI:29035"/>
        <label>1</label>
    </ligand>
</feature>
<feature type="binding site" evidence="1">
    <location>
        <position position="420"/>
    </location>
    <ligand>
        <name>Mn(2+)</name>
        <dbReference type="ChEBI" id="CHEBI:29035"/>
        <label>2</label>
    </ligand>
</feature>